<gene>
    <name type="primary">PET117</name>
    <name type="ORF">UNQ607/PRO1194</name>
</gene>
<accession>Q6UWS5</accession>
<proteinExistence type="evidence at protein level"/>
<comment type="subcellular location">
    <subcellularLocation>
        <location evidence="2">Mitochondrion</location>
    </subcellularLocation>
</comment>
<comment type="disease" evidence="3">
    <disease id="DI-05940">
        <name>Mitochondrial complex IV deficiency, nuclear type 19</name>
        <acronym>MC4DN19</acronym>
        <description>An autosomal recessive mitochondrial disorder with onset in infancy or early childhood. MC4DN19 is characterized by global developmental delay, impaired intellectual development, developmental regression, loss of acquired motor and language skills, and motor dysfunction. Patient tissues show decreased levels and activity of mitochondrial respiratory complex IV.</description>
        <dbReference type="MIM" id="619063"/>
    </disease>
    <text>The disease may be caused by variants affecting the gene represented in this entry.</text>
</comment>
<comment type="similarity">
    <text evidence="4">Belongs to the PET117 family.</text>
</comment>
<keyword id="KW-0225">Disease variant</keyword>
<keyword id="KW-0496">Mitochondrion</keyword>
<keyword id="KW-1274">Primary mitochondrial disease</keyword>
<keyword id="KW-1267">Proteomics identification</keyword>
<keyword id="KW-1185">Reference proteome</keyword>
<keyword id="KW-0809">Transit peptide</keyword>
<evidence type="ECO:0000255" key="1"/>
<evidence type="ECO:0000269" key="2">
    <source>
    </source>
</evidence>
<evidence type="ECO:0000269" key="3">
    <source>
    </source>
</evidence>
<evidence type="ECO:0000305" key="4"/>
<sequence length="81" mass="9223">MSRSSKVVLGLSVLLTAATVAGVHVKQQWDQQRLRDGVIRDIERQIRKKENIRLLGEQIILTEQLEAEREKMLLAKGSQKS</sequence>
<feature type="transit peptide" description="Mitochondrion" evidence="1">
    <location>
        <begin position="1"/>
        <end position="22"/>
    </location>
</feature>
<feature type="chain" id="PRO_0000416096" description="Protein PET117 homolog, mitochondrial">
    <location>
        <begin position="23"/>
        <end position="81"/>
    </location>
</feature>
<feature type="sequence variant" id="VAR_084185" description="In MC4DN19." evidence="3">
    <location>
        <begin position="58"/>
        <end position="81"/>
    </location>
</feature>
<protein>
    <recommendedName>
        <fullName>Protein PET117 homolog, mitochondrial</fullName>
    </recommendedName>
</protein>
<reference key="1">
    <citation type="journal article" date="2003" name="Genome Res.">
        <title>The secreted protein discovery initiative (SPDI), a large-scale effort to identify novel human secreted and transmembrane proteins: a bioinformatics assessment.</title>
        <authorList>
            <person name="Clark H.F."/>
            <person name="Gurney A.L."/>
            <person name="Abaya E."/>
            <person name="Baker K."/>
            <person name="Baldwin D.T."/>
            <person name="Brush J."/>
            <person name="Chen J."/>
            <person name="Chow B."/>
            <person name="Chui C."/>
            <person name="Crowley C."/>
            <person name="Currell B."/>
            <person name="Deuel B."/>
            <person name="Dowd P."/>
            <person name="Eaton D."/>
            <person name="Foster J.S."/>
            <person name="Grimaldi C."/>
            <person name="Gu Q."/>
            <person name="Hass P.E."/>
            <person name="Heldens S."/>
            <person name="Huang A."/>
            <person name="Kim H.S."/>
            <person name="Klimowski L."/>
            <person name="Jin Y."/>
            <person name="Johnson S."/>
            <person name="Lee J."/>
            <person name="Lewis L."/>
            <person name="Liao D."/>
            <person name="Mark M.R."/>
            <person name="Robbie E."/>
            <person name="Sanchez C."/>
            <person name="Schoenfeld J."/>
            <person name="Seshagiri S."/>
            <person name="Simmons L."/>
            <person name="Singh J."/>
            <person name="Smith V."/>
            <person name="Stinson J."/>
            <person name="Vagts A."/>
            <person name="Vandlen R.L."/>
            <person name="Watanabe C."/>
            <person name="Wieand D."/>
            <person name="Woods K."/>
            <person name="Xie M.-H."/>
            <person name="Yansura D.G."/>
            <person name="Yi S."/>
            <person name="Yu G."/>
            <person name="Yuan J."/>
            <person name="Zhang M."/>
            <person name="Zhang Z."/>
            <person name="Goddard A.D."/>
            <person name="Wood W.I."/>
            <person name="Godowski P.J."/>
            <person name="Gray A.M."/>
        </authorList>
    </citation>
    <scope>NUCLEOTIDE SEQUENCE [LARGE SCALE MRNA]</scope>
</reference>
<reference key="2">
    <citation type="journal article" date="2001" name="Nature">
        <title>The DNA sequence and comparative analysis of human chromosome 20.</title>
        <authorList>
            <person name="Deloukas P."/>
            <person name="Matthews L.H."/>
            <person name="Ashurst J.L."/>
            <person name="Burton J."/>
            <person name="Gilbert J.G.R."/>
            <person name="Jones M."/>
            <person name="Stavrides G."/>
            <person name="Almeida J.P."/>
            <person name="Babbage A.K."/>
            <person name="Bagguley C.L."/>
            <person name="Bailey J."/>
            <person name="Barlow K.F."/>
            <person name="Bates K.N."/>
            <person name="Beard L.M."/>
            <person name="Beare D.M."/>
            <person name="Beasley O.P."/>
            <person name="Bird C.P."/>
            <person name="Blakey S.E."/>
            <person name="Bridgeman A.M."/>
            <person name="Brown A.J."/>
            <person name="Buck D."/>
            <person name="Burrill W.D."/>
            <person name="Butler A.P."/>
            <person name="Carder C."/>
            <person name="Carter N.P."/>
            <person name="Chapman J.C."/>
            <person name="Clamp M."/>
            <person name="Clark G."/>
            <person name="Clark L.N."/>
            <person name="Clark S.Y."/>
            <person name="Clee C.M."/>
            <person name="Clegg S."/>
            <person name="Cobley V.E."/>
            <person name="Collier R.E."/>
            <person name="Connor R.E."/>
            <person name="Corby N.R."/>
            <person name="Coulson A."/>
            <person name="Coville G.J."/>
            <person name="Deadman R."/>
            <person name="Dhami P.D."/>
            <person name="Dunn M."/>
            <person name="Ellington A.G."/>
            <person name="Frankland J.A."/>
            <person name="Fraser A."/>
            <person name="French L."/>
            <person name="Garner P."/>
            <person name="Grafham D.V."/>
            <person name="Griffiths C."/>
            <person name="Griffiths M.N.D."/>
            <person name="Gwilliam R."/>
            <person name="Hall R.E."/>
            <person name="Hammond S."/>
            <person name="Harley J.L."/>
            <person name="Heath P.D."/>
            <person name="Ho S."/>
            <person name="Holden J.L."/>
            <person name="Howden P.J."/>
            <person name="Huckle E."/>
            <person name="Hunt A.R."/>
            <person name="Hunt S.E."/>
            <person name="Jekosch K."/>
            <person name="Johnson C.M."/>
            <person name="Johnson D."/>
            <person name="Kay M.P."/>
            <person name="Kimberley A.M."/>
            <person name="King A."/>
            <person name="Knights A."/>
            <person name="Laird G.K."/>
            <person name="Lawlor S."/>
            <person name="Lehvaeslaiho M.H."/>
            <person name="Leversha M.A."/>
            <person name="Lloyd C."/>
            <person name="Lloyd D.M."/>
            <person name="Lovell J.D."/>
            <person name="Marsh V.L."/>
            <person name="Martin S.L."/>
            <person name="McConnachie L.J."/>
            <person name="McLay K."/>
            <person name="McMurray A.A."/>
            <person name="Milne S.A."/>
            <person name="Mistry D."/>
            <person name="Moore M.J.F."/>
            <person name="Mullikin J.C."/>
            <person name="Nickerson T."/>
            <person name="Oliver K."/>
            <person name="Parker A."/>
            <person name="Patel R."/>
            <person name="Pearce T.A.V."/>
            <person name="Peck A.I."/>
            <person name="Phillimore B.J.C.T."/>
            <person name="Prathalingam S.R."/>
            <person name="Plumb R.W."/>
            <person name="Ramsay H."/>
            <person name="Rice C.M."/>
            <person name="Ross M.T."/>
            <person name="Scott C.E."/>
            <person name="Sehra H.K."/>
            <person name="Shownkeen R."/>
            <person name="Sims S."/>
            <person name="Skuce C.D."/>
            <person name="Smith M.L."/>
            <person name="Soderlund C."/>
            <person name="Steward C.A."/>
            <person name="Sulston J.E."/>
            <person name="Swann R.M."/>
            <person name="Sycamore N."/>
            <person name="Taylor R."/>
            <person name="Tee L."/>
            <person name="Thomas D.W."/>
            <person name="Thorpe A."/>
            <person name="Tracey A."/>
            <person name="Tromans A.C."/>
            <person name="Vaudin M."/>
            <person name="Wall M."/>
            <person name="Wallis J.M."/>
            <person name="Whitehead S.L."/>
            <person name="Whittaker P."/>
            <person name="Willey D.L."/>
            <person name="Williams L."/>
            <person name="Williams S.A."/>
            <person name="Wilming L."/>
            <person name="Wray P.W."/>
            <person name="Hubbard T."/>
            <person name="Durbin R.M."/>
            <person name="Bentley D.R."/>
            <person name="Beck S."/>
            <person name="Rogers J."/>
        </authorList>
    </citation>
    <scope>NUCLEOTIDE SEQUENCE [LARGE SCALE GENOMIC DNA]</scope>
</reference>
<reference key="3">
    <citation type="journal article" date="2012" name="Genome Biol.">
        <title>Iterative orthology prediction uncovers new mitochondrial proteins and identifies C12orf62 as the human ortholog of COX14, a protein involved in the assembly of cytochrome c oxidase.</title>
        <authorList>
            <person name="Szklarczyk R."/>
            <person name="Wanschers B.F."/>
            <person name="Cuypers T.D."/>
            <person name="Esseling J.J."/>
            <person name="Riemersma M."/>
            <person name="van den Brand M.A."/>
            <person name="Gloerich J."/>
            <person name="Lasonder E."/>
            <person name="van den Heuvel L.P."/>
            <person name="Nijtmans L.G."/>
            <person name="Huynen M.A."/>
        </authorList>
    </citation>
    <scope>SUBCELLULAR LOCATION</scope>
</reference>
<reference key="4">
    <citation type="journal article" date="2017" name="Hum. Genet.">
        <title>Mutated PET117 causes complex IV deficiency and is associated with neurodevelopmental regression and medulla oblongata lesions.</title>
        <authorList>
            <person name="Renkema G.H."/>
            <person name="Visser G."/>
            <person name="Baertling F."/>
            <person name="Wintjes L.T."/>
            <person name="Wolters V.M."/>
            <person name="van Montfrans J."/>
            <person name="de Kort G.A.P."/>
            <person name="Nikkels P.G.J."/>
            <person name="van Hasselt P.M."/>
            <person name="van der Crabben S.N."/>
            <person name="Rodenburg R.J.T."/>
        </authorList>
    </citation>
    <scope>INVOLVEMENT IN MC4DN19</scope>
    <scope>VARIANT MC4DN19 58-GLN--SER-81 DEL</scope>
</reference>
<name>PT117_HUMAN</name>
<organism>
    <name type="scientific">Homo sapiens</name>
    <name type="common">Human</name>
    <dbReference type="NCBI Taxonomy" id="9606"/>
    <lineage>
        <taxon>Eukaryota</taxon>
        <taxon>Metazoa</taxon>
        <taxon>Chordata</taxon>
        <taxon>Craniata</taxon>
        <taxon>Vertebrata</taxon>
        <taxon>Euteleostomi</taxon>
        <taxon>Mammalia</taxon>
        <taxon>Eutheria</taxon>
        <taxon>Euarchontoglires</taxon>
        <taxon>Primates</taxon>
        <taxon>Haplorrhini</taxon>
        <taxon>Catarrhini</taxon>
        <taxon>Hominidae</taxon>
        <taxon>Homo</taxon>
    </lineage>
</organism>
<dbReference type="EMBL" id="AY358666">
    <property type="protein sequence ID" value="AAQ89029.1"/>
    <property type="molecule type" value="mRNA"/>
</dbReference>
<dbReference type="EMBL" id="AL050321">
    <property type="status" value="NOT_ANNOTATED_CDS"/>
    <property type="molecule type" value="Genomic_DNA"/>
</dbReference>
<dbReference type="CCDS" id="CCDS54450.1"/>
<dbReference type="RefSeq" id="NP_001158283.1">
    <property type="nucleotide sequence ID" value="NM_001164811.2"/>
</dbReference>
<dbReference type="SMR" id="Q6UWS5"/>
<dbReference type="BioGRID" id="1147409">
    <property type="interactions" value="4"/>
</dbReference>
<dbReference type="CORUM" id="Q6UWS5"/>
<dbReference type="FunCoup" id="Q6UWS5">
    <property type="interactions" value="459"/>
</dbReference>
<dbReference type="STRING" id="9606.ENSP00000397881"/>
<dbReference type="PhosphoSitePlus" id="Q6UWS5"/>
<dbReference type="BioMuta" id="PET117"/>
<dbReference type="DMDM" id="74738135"/>
<dbReference type="jPOST" id="Q6UWS5"/>
<dbReference type="MassIVE" id="Q6UWS5"/>
<dbReference type="PaxDb" id="9606-ENSP00000397881"/>
<dbReference type="PeptideAtlas" id="Q6UWS5"/>
<dbReference type="ProteomicsDB" id="67518"/>
<dbReference type="Pumba" id="Q6UWS5"/>
<dbReference type="Antibodypedia" id="62804">
    <property type="antibodies" value="12 antibodies from 9 providers"/>
</dbReference>
<dbReference type="DNASU" id="100303755"/>
<dbReference type="Ensembl" id="ENST00000432901.4">
    <property type="protein sequence ID" value="ENSP00000397881.2"/>
    <property type="gene ID" value="ENSG00000232838.4"/>
</dbReference>
<dbReference type="GeneID" id="100303755"/>
<dbReference type="KEGG" id="hsa:100303755"/>
<dbReference type="MANE-Select" id="ENST00000432901.4">
    <property type="protein sequence ID" value="ENSP00000397881.2"/>
    <property type="RefSeq nucleotide sequence ID" value="NM_001164811.2"/>
    <property type="RefSeq protein sequence ID" value="NP_001158283.1"/>
</dbReference>
<dbReference type="UCSC" id="uc021wba.2">
    <property type="organism name" value="human"/>
</dbReference>
<dbReference type="AGR" id="HGNC:40045"/>
<dbReference type="CTD" id="100303755"/>
<dbReference type="DisGeNET" id="100303755"/>
<dbReference type="GeneCards" id="PET117"/>
<dbReference type="HGNC" id="HGNC:40045">
    <property type="gene designation" value="PET117"/>
</dbReference>
<dbReference type="HPA" id="ENSG00000232838">
    <property type="expression patterns" value="Low tissue specificity"/>
</dbReference>
<dbReference type="MalaCards" id="PET117"/>
<dbReference type="MIM" id="614771">
    <property type="type" value="gene"/>
</dbReference>
<dbReference type="MIM" id="619063">
    <property type="type" value="phenotype"/>
</dbReference>
<dbReference type="neXtProt" id="NX_Q6UWS5"/>
<dbReference type="OpenTargets" id="ENSG00000232838"/>
<dbReference type="Orphanet" id="254905">
    <property type="disease" value="Isolated cytochrome C oxidase deficiency"/>
</dbReference>
<dbReference type="VEuPathDB" id="HostDB:ENSG00000232838"/>
<dbReference type="eggNOG" id="ENOG502S7B1">
    <property type="taxonomic scope" value="Eukaryota"/>
</dbReference>
<dbReference type="GeneTree" id="ENSGT00520000059926"/>
<dbReference type="HOGENOM" id="CLU_161486_2_0_1"/>
<dbReference type="InParanoid" id="Q6UWS5"/>
<dbReference type="OMA" id="WDRERLH"/>
<dbReference type="OrthoDB" id="76305at2759"/>
<dbReference type="PAN-GO" id="Q6UWS5">
    <property type="GO annotations" value="2 GO annotations based on evolutionary models"/>
</dbReference>
<dbReference type="PhylomeDB" id="Q6UWS5"/>
<dbReference type="PathwayCommons" id="Q6UWS5"/>
<dbReference type="Reactome" id="R-HSA-9864848">
    <property type="pathway name" value="Complex IV assembly"/>
</dbReference>
<dbReference type="BioGRID-ORCS" id="100303755">
    <property type="hits" value="264 hits in 1160 CRISPR screens"/>
</dbReference>
<dbReference type="ChiTaRS" id="PET117">
    <property type="organism name" value="human"/>
</dbReference>
<dbReference type="GenomeRNAi" id="100303755"/>
<dbReference type="Pharos" id="Q6UWS5">
    <property type="development level" value="Tdark"/>
</dbReference>
<dbReference type="PRO" id="PR:Q6UWS5"/>
<dbReference type="Proteomes" id="UP000005640">
    <property type="component" value="Chromosome 20"/>
</dbReference>
<dbReference type="RNAct" id="Q6UWS5">
    <property type="molecule type" value="protein"/>
</dbReference>
<dbReference type="Bgee" id="ENSG00000232838">
    <property type="expression patterns" value="Expressed in endothelial cell and 174 other cell types or tissues"/>
</dbReference>
<dbReference type="ExpressionAtlas" id="Q6UWS5">
    <property type="expression patterns" value="baseline and differential"/>
</dbReference>
<dbReference type="GO" id="GO:0005739">
    <property type="term" value="C:mitochondrion"/>
    <property type="evidence" value="ECO:0000314"/>
    <property type="project" value="UniProtKB"/>
</dbReference>
<dbReference type="GO" id="GO:0033617">
    <property type="term" value="P:mitochondrial cytochrome c oxidase assembly"/>
    <property type="evidence" value="ECO:0000318"/>
    <property type="project" value="GO_Central"/>
</dbReference>
<dbReference type="InterPro" id="IPR031568">
    <property type="entry name" value="Pet117"/>
</dbReference>
<dbReference type="PANTHER" id="PTHR28163">
    <property type="entry name" value="PROTEIN PET117 HOMOLOG, MITOCHONDRIAL"/>
    <property type="match status" value="1"/>
</dbReference>
<dbReference type="PANTHER" id="PTHR28163:SF1">
    <property type="entry name" value="PROTEIN PET117 HOMOLOG, MITOCHONDRIAL"/>
    <property type="match status" value="1"/>
</dbReference>
<dbReference type="Pfam" id="PF15786">
    <property type="entry name" value="PET117"/>
    <property type="match status" value="1"/>
</dbReference>